<comment type="function">
    <text evidence="3">The small GTPases Rab are key regulators of intracellular membrane trafficking, from the formation of transport vesicles to their fusion with membranes. Rabs cycle between active GTP-bound and inactive GDP-bound states. In their active state, drive transport of vesicular carriers from donor organelles to acceptor organelles to regulate the membrane traffic that maintains organelle identity and morphology. RAB2A regulates autophagy by promoting autophagosome-lysosome fusion via recruitment of the HOPS endosomal tethering complex; this process involves autophagosomal RAB2A and lysosomal RAB39A recruitment of HOPS subcomplexes VPS39-VPS11 and VPS41-VPS16-VPS18-VPS33A, respectively, which assemble into a functional complex to mediate membrane tethering and SNAREs-driven membrane fusion. Required for protein transport from the endoplasmic reticulum to the Golgi complex. Regulates the compacted morphology of the Golgi. Together with RAB2B, redundantly required for efficient autophagic flux.</text>
</comment>
<comment type="catalytic activity">
    <reaction evidence="2">
        <text>GTP + H2O = GDP + phosphate + H(+)</text>
        <dbReference type="Rhea" id="RHEA:19669"/>
        <dbReference type="ChEBI" id="CHEBI:15377"/>
        <dbReference type="ChEBI" id="CHEBI:15378"/>
        <dbReference type="ChEBI" id="CHEBI:37565"/>
        <dbReference type="ChEBI" id="CHEBI:43474"/>
        <dbReference type="ChEBI" id="CHEBI:58189"/>
        <dbReference type="EC" id="3.6.5.2"/>
    </reaction>
    <physiologicalReaction direction="left-to-right" evidence="2">
        <dbReference type="Rhea" id="RHEA:19670"/>
    </physiologicalReaction>
</comment>
<comment type="cofactor">
    <cofactor evidence="3">
        <name>Mg(2+)</name>
        <dbReference type="ChEBI" id="CHEBI:18420"/>
    </cofactor>
</comment>
<comment type="activity regulation">
    <text evidence="5">Regulated by guanine nucleotide exchange factors (GEFs) which promote the exchange of bound GDP for free GTP, GTPase activating proteins (GAPs) which increase the GTP hydrolysis activity, and GDP dissociation inhibitors (GDIs) which inhibit the dissociation of the nucleotide from the GTPase.</text>
</comment>
<comment type="subunit">
    <text evidence="2 3">Interacts with PRKCI. Interacts with TRIP11 (By similarity). Interacts (in GTP-bound form) with GARIN1B (By similarity). Interacts (GTP-bound) with HOPS complex component VPS39; interaction contributes to obtaining a functional HOPS complex that promotes autophagosome-lysosome membrane fusion driven by STX17-SNAP29-VAMP8. May interact with VPS41 (By similarity).</text>
</comment>
<comment type="subcellular location">
    <subcellularLocation>
        <location evidence="3">Endoplasmic reticulum-Golgi intermediate compartment membrane</location>
        <topology evidence="3">Lipid-anchor</topology>
        <orientation evidence="5">Cytoplasmic side</orientation>
    </subcellularLocation>
    <subcellularLocation>
        <location evidence="3">Melanosome</location>
    </subcellularLocation>
    <subcellularLocation>
        <location evidence="3">Endoplasmic reticulum membrane</location>
        <topology evidence="3">Lipid-anchor</topology>
        <orientation evidence="5">Cytoplasmic side</orientation>
    </subcellularLocation>
    <subcellularLocation>
        <location evidence="3">Golgi apparatus membrane</location>
        <topology evidence="3">Lipid-anchor</topology>
        <orientation evidence="5">Cytoplasmic side</orientation>
    </subcellularLocation>
    <subcellularLocation>
        <location evidence="2">Cytoplasmic vesicle</location>
        <location evidence="2">Secretory vesicle</location>
        <location evidence="2">Acrosome</location>
    </subcellularLocation>
    <subcellularLocation>
        <location evidence="2">Cytoplasmic vesicle</location>
        <location evidence="2">Autophagosome membrane</location>
        <topology evidence="3">Lipid-anchor</topology>
        <orientation evidence="5">Cytoplasmic side</orientation>
    </subcellularLocation>
    <text evidence="2 3">Localized in the Golgi apparatus in the round spermatids and in the acrosome in the elongating spermatid (By similarity). Identified by mass spectrometry in melanosome fractions from stage I to stage IV (By similarity).</text>
</comment>
<comment type="domain">
    <text evidence="4">Switch I, switch II and the interswitch regions are characteristic of Rab GTPases and mediate the interactions with Rab downstream effectors. The switch regions undergo conformational changes upon nucleotide binding which drives interaction with specific sets of effector proteins, with most effectors only binding to GTP-bound Rab.</text>
</comment>
<comment type="PTM">
    <text evidence="3">Prenylated. Prenylation is required for association with cellular membranes.</text>
</comment>
<comment type="similarity">
    <text evidence="5">Belongs to the small GTPase superfamily. Rab family.</text>
</comment>
<reference key="1">
    <citation type="submission" date="2004-11" db="EMBL/GenBank/DDBJ databases">
        <authorList>
            <consortium name="The German cDNA consortium"/>
        </authorList>
    </citation>
    <scope>NUCLEOTIDE SEQUENCE [LARGE SCALE MRNA]</scope>
    <source>
        <tissue>Brain cortex</tissue>
    </source>
</reference>
<feature type="initiator methionine" description="Removed" evidence="3">
    <location>
        <position position="1"/>
    </location>
</feature>
<feature type="chain" id="PRO_0000260523" description="Ras-related protein Rab-2A">
    <location>
        <begin position="2"/>
        <end position="212"/>
    </location>
</feature>
<feature type="region of interest" description="Required for interaction with PRKCI" evidence="1">
    <location>
        <begin position="2"/>
        <end position="19"/>
    </location>
</feature>
<feature type="short sequence motif" description="Switch 1" evidence="4">
    <location>
        <begin position="37"/>
        <end position="42"/>
    </location>
</feature>
<feature type="short sequence motif" description="Switch 2" evidence="4">
    <location>
        <begin position="63"/>
        <end position="72"/>
    </location>
</feature>
<feature type="binding site" evidence="4">
    <location>
        <position position="16"/>
    </location>
    <ligand>
        <name>GTP</name>
        <dbReference type="ChEBI" id="CHEBI:37565"/>
    </ligand>
</feature>
<feature type="binding site" evidence="4">
    <location>
        <position position="17"/>
    </location>
    <ligand>
        <name>GTP</name>
        <dbReference type="ChEBI" id="CHEBI:37565"/>
    </ligand>
</feature>
<feature type="binding site" evidence="4">
    <location>
        <position position="18"/>
    </location>
    <ligand>
        <name>GTP</name>
        <dbReference type="ChEBI" id="CHEBI:37565"/>
    </ligand>
</feature>
<feature type="binding site" evidence="4">
    <location>
        <position position="19"/>
    </location>
    <ligand>
        <name>GTP</name>
        <dbReference type="ChEBI" id="CHEBI:37565"/>
    </ligand>
</feature>
<feature type="binding site" evidence="4">
    <location>
        <position position="20"/>
    </location>
    <ligand>
        <name>GTP</name>
        <dbReference type="ChEBI" id="CHEBI:37565"/>
    </ligand>
</feature>
<feature type="binding site" evidence="3">
    <location>
        <position position="20"/>
    </location>
    <ligand>
        <name>Mg(2+)</name>
        <dbReference type="ChEBI" id="CHEBI:18420"/>
    </ligand>
</feature>
<feature type="binding site" evidence="4">
    <location>
        <position position="21"/>
    </location>
    <ligand>
        <name>GTP</name>
        <dbReference type="ChEBI" id="CHEBI:37565"/>
    </ligand>
</feature>
<feature type="binding site" evidence="4">
    <location>
        <position position="38"/>
    </location>
    <ligand>
        <name>GTP</name>
        <dbReference type="ChEBI" id="CHEBI:37565"/>
    </ligand>
</feature>
<feature type="binding site" evidence="4">
    <location>
        <position position="38"/>
    </location>
    <ligand>
        <name>Mg(2+)</name>
        <dbReference type="ChEBI" id="CHEBI:18420"/>
    </ligand>
</feature>
<feature type="binding site" evidence="3">
    <location>
        <position position="61"/>
    </location>
    <ligand>
        <name>Mg(2+)</name>
        <dbReference type="ChEBI" id="CHEBI:18420"/>
    </ligand>
</feature>
<feature type="binding site" evidence="4">
    <location>
        <position position="64"/>
    </location>
    <ligand>
        <name>GTP</name>
        <dbReference type="ChEBI" id="CHEBI:37565"/>
    </ligand>
</feature>
<feature type="binding site" evidence="4">
    <location>
        <position position="119"/>
    </location>
    <ligand>
        <name>GTP</name>
        <dbReference type="ChEBI" id="CHEBI:37565"/>
    </ligand>
</feature>
<feature type="binding site" evidence="4">
    <location>
        <position position="120"/>
    </location>
    <ligand>
        <name>GTP</name>
        <dbReference type="ChEBI" id="CHEBI:37565"/>
    </ligand>
</feature>
<feature type="binding site" evidence="4">
    <location>
        <position position="122"/>
    </location>
    <ligand>
        <name>GTP</name>
        <dbReference type="ChEBI" id="CHEBI:37565"/>
    </ligand>
</feature>
<feature type="binding site" evidence="4">
    <location>
        <position position="150"/>
    </location>
    <ligand>
        <name>GTP</name>
        <dbReference type="ChEBI" id="CHEBI:37565"/>
    </ligand>
</feature>
<feature type="binding site" evidence="4">
    <location>
        <position position="151"/>
    </location>
    <ligand>
        <name>GTP</name>
        <dbReference type="ChEBI" id="CHEBI:37565"/>
    </ligand>
</feature>
<feature type="modified residue" description="N-acetylalanine" evidence="3">
    <location>
        <position position="2"/>
    </location>
</feature>
<feature type="lipid moiety-binding region" description="S-geranylgeranyl cysteine" evidence="1">
    <location>
        <position position="211"/>
    </location>
</feature>
<feature type="lipid moiety-binding region" description="S-geranylgeranyl cysteine" evidence="1">
    <location>
        <position position="212"/>
    </location>
</feature>
<accession>Q5R6B6</accession>
<organism>
    <name type="scientific">Pongo abelii</name>
    <name type="common">Sumatran orangutan</name>
    <name type="synonym">Pongo pygmaeus abelii</name>
    <dbReference type="NCBI Taxonomy" id="9601"/>
    <lineage>
        <taxon>Eukaryota</taxon>
        <taxon>Metazoa</taxon>
        <taxon>Chordata</taxon>
        <taxon>Craniata</taxon>
        <taxon>Vertebrata</taxon>
        <taxon>Euteleostomi</taxon>
        <taxon>Mammalia</taxon>
        <taxon>Eutheria</taxon>
        <taxon>Euarchontoglires</taxon>
        <taxon>Primates</taxon>
        <taxon>Haplorrhini</taxon>
        <taxon>Catarrhini</taxon>
        <taxon>Hominidae</taxon>
        <taxon>Pongo</taxon>
    </lineage>
</organism>
<protein>
    <recommendedName>
        <fullName>Ras-related protein Rab-2A</fullName>
        <ecNumber evidence="2">3.6.5.2</ecNumber>
    </recommendedName>
</protein>
<name>RAB2A_PONAB</name>
<evidence type="ECO:0000250" key="1"/>
<evidence type="ECO:0000250" key="2">
    <source>
        <dbReference type="UniProtKB" id="P53994"/>
    </source>
</evidence>
<evidence type="ECO:0000250" key="3">
    <source>
        <dbReference type="UniProtKB" id="P61019"/>
    </source>
</evidence>
<evidence type="ECO:0000250" key="4">
    <source>
        <dbReference type="UniProtKB" id="P61106"/>
    </source>
</evidence>
<evidence type="ECO:0000305" key="5"/>
<proteinExistence type="evidence at transcript level"/>
<gene>
    <name type="primary">RAB2A</name>
    <name type="synonym">RAB2</name>
</gene>
<sequence length="212" mass="23546">MAYAYLFKYIIIGDTGVGKSCLLLQFTDKRFQPVHDLTIGVEFGARMITIDGKQIKLQIWDTAGQESFRSITRSYYRGAAGALLVYDITRRDTFNHLTTWLEDARQHSNSNMVIMLIGNKSDLESRREVKKEEGEAFAREHGLIFMETSAKTASNVEEAFINTAKEIYEKIQEGVFDINNEANGIKIGPQHAATNATHAGNQGGQQAGGGCC</sequence>
<keyword id="KW-0007">Acetylation</keyword>
<keyword id="KW-0968">Cytoplasmic vesicle</keyword>
<keyword id="KW-0256">Endoplasmic reticulum</keyword>
<keyword id="KW-0931">ER-Golgi transport</keyword>
<keyword id="KW-0333">Golgi apparatus</keyword>
<keyword id="KW-0342">GTP-binding</keyword>
<keyword id="KW-0378">Hydrolase</keyword>
<keyword id="KW-0449">Lipoprotein</keyword>
<keyword id="KW-0460">Magnesium</keyword>
<keyword id="KW-0472">Membrane</keyword>
<keyword id="KW-0479">Metal-binding</keyword>
<keyword id="KW-0547">Nucleotide-binding</keyword>
<keyword id="KW-0636">Prenylation</keyword>
<keyword id="KW-0653">Protein transport</keyword>
<keyword id="KW-1185">Reference proteome</keyword>
<keyword id="KW-0813">Transport</keyword>
<dbReference type="EC" id="3.6.5.2" evidence="2"/>
<dbReference type="EMBL" id="CR860575">
    <property type="protein sequence ID" value="CAH92700.1"/>
    <property type="molecule type" value="mRNA"/>
</dbReference>
<dbReference type="RefSeq" id="NP_001126581.1">
    <property type="nucleotide sequence ID" value="NM_001133109.1"/>
</dbReference>
<dbReference type="SMR" id="Q5R6B6"/>
<dbReference type="FunCoup" id="Q5R6B6">
    <property type="interactions" value="3261"/>
</dbReference>
<dbReference type="STRING" id="9601.ENSPPYP00000020877"/>
<dbReference type="Ensembl" id="ENSPPYT00000021711.3">
    <property type="protein sequence ID" value="ENSPPYP00000020877.2"/>
    <property type="gene ID" value="ENSPPYG00000018617.3"/>
</dbReference>
<dbReference type="GeneID" id="100173573"/>
<dbReference type="KEGG" id="pon:100173573"/>
<dbReference type="CTD" id="5862"/>
<dbReference type="eggNOG" id="KOG0098">
    <property type="taxonomic scope" value="Eukaryota"/>
</dbReference>
<dbReference type="GeneTree" id="ENSGT00940000153886"/>
<dbReference type="HOGENOM" id="CLU_041217_23_1_1"/>
<dbReference type="InParanoid" id="Q5R6B6"/>
<dbReference type="OMA" id="TNATHAC"/>
<dbReference type="OrthoDB" id="9989112at2759"/>
<dbReference type="TreeFam" id="TF300032"/>
<dbReference type="Proteomes" id="UP000001595">
    <property type="component" value="Chromosome 8"/>
</dbReference>
<dbReference type="GO" id="GO:0001669">
    <property type="term" value="C:acrosomal vesicle"/>
    <property type="evidence" value="ECO:0007669"/>
    <property type="project" value="UniProtKB-SubCell"/>
</dbReference>
<dbReference type="GO" id="GO:0000421">
    <property type="term" value="C:autophagosome membrane"/>
    <property type="evidence" value="ECO:0007669"/>
    <property type="project" value="UniProtKB-SubCell"/>
</dbReference>
<dbReference type="GO" id="GO:0005789">
    <property type="term" value="C:endoplasmic reticulum membrane"/>
    <property type="evidence" value="ECO:0007669"/>
    <property type="project" value="UniProtKB-SubCell"/>
</dbReference>
<dbReference type="GO" id="GO:0033116">
    <property type="term" value="C:endoplasmic reticulum-Golgi intermediate compartment membrane"/>
    <property type="evidence" value="ECO:0007669"/>
    <property type="project" value="UniProtKB-SubCell"/>
</dbReference>
<dbReference type="GO" id="GO:0000139">
    <property type="term" value="C:Golgi membrane"/>
    <property type="evidence" value="ECO:0007669"/>
    <property type="project" value="UniProtKB-SubCell"/>
</dbReference>
<dbReference type="GO" id="GO:0042470">
    <property type="term" value="C:melanosome"/>
    <property type="evidence" value="ECO:0007669"/>
    <property type="project" value="UniProtKB-SubCell"/>
</dbReference>
<dbReference type="GO" id="GO:0003925">
    <property type="term" value="F:G protein activity"/>
    <property type="evidence" value="ECO:0000250"/>
    <property type="project" value="UniProtKB"/>
</dbReference>
<dbReference type="GO" id="GO:0019003">
    <property type="term" value="F:GDP binding"/>
    <property type="evidence" value="ECO:0000250"/>
    <property type="project" value="UniProtKB"/>
</dbReference>
<dbReference type="GO" id="GO:0005525">
    <property type="term" value="F:GTP binding"/>
    <property type="evidence" value="ECO:0000250"/>
    <property type="project" value="UniProtKB"/>
</dbReference>
<dbReference type="GO" id="GO:0003924">
    <property type="term" value="F:GTPase activity"/>
    <property type="evidence" value="ECO:0000250"/>
    <property type="project" value="UniProtKB"/>
</dbReference>
<dbReference type="GO" id="GO:0061909">
    <property type="term" value="P:autophagosome-lysosome fusion"/>
    <property type="evidence" value="ECO:0000250"/>
    <property type="project" value="UniProtKB"/>
</dbReference>
<dbReference type="GO" id="GO:0007030">
    <property type="term" value="P:Golgi organization"/>
    <property type="evidence" value="ECO:0000250"/>
    <property type="project" value="UniProtKB"/>
</dbReference>
<dbReference type="GO" id="GO:0016236">
    <property type="term" value="P:macroautophagy"/>
    <property type="evidence" value="ECO:0000250"/>
    <property type="project" value="UniProtKB"/>
</dbReference>
<dbReference type="GO" id="GO:0015031">
    <property type="term" value="P:protein transport"/>
    <property type="evidence" value="ECO:0007669"/>
    <property type="project" value="UniProtKB-KW"/>
</dbReference>
<dbReference type="CDD" id="cd01866">
    <property type="entry name" value="Rab2"/>
    <property type="match status" value="1"/>
</dbReference>
<dbReference type="FunFam" id="3.40.50.300:FF:000275">
    <property type="entry name" value="Putative ras-related protein Rab-2A"/>
    <property type="match status" value="1"/>
</dbReference>
<dbReference type="Gene3D" id="3.40.50.300">
    <property type="entry name" value="P-loop containing nucleotide triphosphate hydrolases"/>
    <property type="match status" value="1"/>
</dbReference>
<dbReference type="InterPro" id="IPR027417">
    <property type="entry name" value="P-loop_NTPase"/>
</dbReference>
<dbReference type="InterPro" id="IPR050209">
    <property type="entry name" value="Rab_GTPases_membrane_traffic"/>
</dbReference>
<dbReference type="InterPro" id="IPR005225">
    <property type="entry name" value="Small_GTP-bd"/>
</dbReference>
<dbReference type="InterPro" id="IPR001806">
    <property type="entry name" value="Small_GTPase"/>
</dbReference>
<dbReference type="NCBIfam" id="TIGR00231">
    <property type="entry name" value="small_GTP"/>
    <property type="match status" value="1"/>
</dbReference>
<dbReference type="PANTHER" id="PTHR47979">
    <property type="entry name" value="DRAB11-RELATED"/>
    <property type="match status" value="1"/>
</dbReference>
<dbReference type="Pfam" id="PF00071">
    <property type="entry name" value="Ras"/>
    <property type="match status" value="1"/>
</dbReference>
<dbReference type="PRINTS" id="PR00449">
    <property type="entry name" value="RASTRNSFRMNG"/>
</dbReference>
<dbReference type="SMART" id="SM00175">
    <property type="entry name" value="RAB"/>
    <property type="match status" value="1"/>
</dbReference>
<dbReference type="SMART" id="SM00176">
    <property type="entry name" value="RAN"/>
    <property type="match status" value="1"/>
</dbReference>
<dbReference type="SMART" id="SM00173">
    <property type="entry name" value="RAS"/>
    <property type="match status" value="1"/>
</dbReference>
<dbReference type="SMART" id="SM00174">
    <property type="entry name" value="RHO"/>
    <property type="match status" value="1"/>
</dbReference>
<dbReference type="SUPFAM" id="SSF52540">
    <property type="entry name" value="P-loop containing nucleoside triphosphate hydrolases"/>
    <property type="match status" value="1"/>
</dbReference>
<dbReference type="PROSITE" id="PS51419">
    <property type="entry name" value="RAB"/>
    <property type="match status" value="1"/>
</dbReference>